<sequence length="137" mass="15709">MLSPKRTKFRRHHRGRMKGKANRGNSIVYGDFGLQALEPGWIKSRQIESGRRVLTRYVRRNGKLWVCLFPDKPVTMRAAESRMGSGKGMPEYWVAVVKPGKILYELTGLTETVARKALRITGHKMPVKTQIVINKKF</sequence>
<proteinExistence type="inferred from homology"/>
<protein>
    <recommendedName>
        <fullName evidence="1">Large ribosomal subunit protein uL16c</fullName>
    </recommendedName>
    <alternativeName>
        <fullName evidence="3">50S ribosomal protein L16, chloroplastic</fullName>
    </alternativeName>
</protein>
<gene>
    <name evidence="1" type="primary">rpl16</name>
</gene>
<dbReference type="EMBL" id="AY835431">
    <property type="protein sequence ID" value="AAV80607.1"/>
    <property type="molecule type" value="Genomic_DNA"/>
</dbReference>
<dbReference type="RefSeq" id="YP_636183.1">
    <property type="nucleotide sequence ID" value="NC_008114.1"/>
</dbReference>
<dbReference type="SMR" id="Q3ZJ84"/>
<dbReference type="GeneID" id="4108787"/>
<dbReference type="GO" id="GO:0009507">
    <property type="term" value="C:chloroplast"/>
    <property type="evidence" value="ECO:0007669"/>
    <property type="project" value="UniProtKB-SubCell"/>
</dbReference>
<dbReference type="GO" id="GO:0005762">
    <property type="term" value="C:mitochondrial large ribosomal subunit"/>
    <property type="evidence" value="ECO:0007669"/>
    <property type="project" value="TreeGrafter"/>
</dbReference>
<dbReference type="GO" id="GO:0019843">
    <property type="term" value="F:rRNA binding"/>
    <property type="evidence" value="ECO:0007669"/>
    <property type="project" value="InterPro"/>
</dbReference>
<dbReference type="GO" id="GO:0003735">
    <property type="term" value="F:structural constituent of ribosome"/>
    <property type="evidence" value="ECO:0007669"/>
    <property type="project" value="InterPro"/>
</dbReference>
<dbReference type="GO" id="GO:0032543">
    <property type="term" value="P:mitochondrial translation"/>
    <property type="evidence" value="ECO:0007669"/>
    <property type="project" value="TreeGrafter"/>
</dbReference>
<dbReference type="CDD" id="cd01433">
    <property type="entry name" value="Ribosomal_L16_L10e"/>
    <property type="match status" value="1"/>
</dbReference>
<dbReference type="FunFam" id="3.90.1170.10:FF:000001">
    <property type="entry name" value="50S ribosomal protein L16"/>
    <property type="match status" value="1"/>
</dbReference>
<dbReference type="Gene3D" id="3.90.1170.10">
    <property type="entry name" value="Ribosomal protein L10e/L16"/>
    <property type="match status" value="1"/>
</dbReference>
<dbReference type="HAMAP" id="MF_01342">
    <property type="entry name" value="Ribosomal_uL16"/>
    <property type="match status" value="1"/>
</dbReference>
<dbReference type="InterPro" id="IPR047873">
    <property type="entry name" value="Ribosomal_uL16"/>
</dbReference>
<dbReference type="InterPro" id="IPR000114">
    <property type="entry name" value="Ribosomal_uL16_bact-type"/>
</dbReference>
<dbReference type="InterPro" id="IPR020798">
    <property type="entry name" value="Ribosomal_uL16_CS"/>
</dbReference>
<dbReference type="InterPro" id="IPR016180">
    <property type="entry name" value="Ribosomal_uL16_dom"/>
</dbReference>
<dbReference type="InterPro" id="IPR036920">
    <property type="entry name" value="Ribosomal_uL16_sf"/>
</dbReference>
<dbReference type="NCBIfam" id="TIGR01164">
    <property type="entry name" value="rplP_bact"/>
    <property type="match status" value="1"/>
</dbReference>
<dbReference type="PANTHER" id="PTHR12220">
    <property type="entry name" value="50S/60S RIBOSOMAL PROTEIN L16"/>
    <property type="match status" value="1"/>
</dbReference>
<dbReference type="PANTHER" id="PTHR12220:SF13">
    <property type="entry name" value="LARGE RIBOSOMAL SUBUNIT PROTEIN UL16M"/>
    <property type="match status" value="1"/>
</dbReference>
<dbReference type="Pfam" id="PF00252">
    <property type="entry name" value="Ribosomal_L16"/>
    <property type="match status" value="1"/>
</dbReference>
<dbReference type="PRINTS" id="PR00060">
    <property type="entry name" value="RIBOSOMALL16"/>
</dbReference>
<dbReference type="SUPFAM" id="SSF54686">
    <property type="entry name" value="Ribosomal protein L16p/L10e"/>
    <property type="match status" value="1"/>
</dbReference>
<dbReference type="PROSITE" id="PS00701">
    <property type="entry name" value="RIBOSOMAL_L16_2"/>
    <property type="match status" value="1"/>
</dbReference>
<reference key="1">
    <citation type="journal article" date="2005" name="Mol. Biol. Evol.">
        <title>The chloroplast genome sequence of the green alga Pseudendoclonium akinetum (Ulvophyceae) reveals unusual structural features and new insights into the branching order of chlorophyte lineages.</title>
        <authorList>
            <person name="Pombert J.-F."/>
            <person name="Otis C."/>
            <person name="Lemieux C."/>
            <person name="Turmel M."/>
        </authorList>
    </citation>
    <scope>NUCLEOTIDE SEQUENCE [LARGE SCALE GENOMIC DNA]</scope>
    <source>
        <strain>UTEX 1912</strain>
    </source>
</reference>
<geneLocation type="chloroplast"/>
<evidence type="ECO:0000255" key="1">
    <source>
        <dbReference type="HAMAP-Rule" id="MF_01342"/>
    </source>
</evidence>
<evidence type="ECO:0000256" key="2">
    <source>
        <dbReference type="SAM" id="MobiDB-lite"/>
    </source>
</evidence>
<evidence type="ECO:0000305" key="3"/>
<accession>Q3ZJ84</accession>
<keyword id="KW-0150">Chloroplast</keyword>
<keyword id="KW-0934">Plastid</keyword>
<keyword id="KW-0687">Ribonucleoprotein</keyword>
<keyword id="KW-0689">Ribosomal protein</keyword>
<comment type="subunit">
    <text evidence="1">Part of the 50S ribosomal subunit.</text>
</comment>
<comment type="subcellular location">
    <subcellularLocation>
        <location>Plastid</location>
        <location>Chloroplast</location>
    </subcellularLocation>
</comment>
<comment type="similarity">
    <text evidence="1">Belongs to the universal ribosomal protein uL16 family.</text>
</comment>
<organism>
    <name type="scientific">Tupiella akineta</name>
    <name type="common">Green alga</name>
    <name type="synonym">Pseudendoclonium akinetum</name>
    <dbReference type="NCBI Taxonomy" id="160070"/>
    <lineage>
        <taxon>Eukaryota</taxon>
        <taxon>Viridiplantae</taxon>
        <taxon>Chlorophyta</taxon>
        <taxon>Ulvophyceae</taxon>
        <taxon>OUU clade</taxon>
        <taxon>Ulotrichales</taxon>
        <taxon>Tupiellaceae</taxon>
        <taxon>Tupiella</taxon>
    </lineage>
</organism>
<feature type="chain" id="PRO_0000062308" description="Large ribosomal subunit protein uL16c">
    <location>
        <begin position="1"/>
        <end position="137"/>
    </location>
</feature>
<feature type="region of interest" description="Disordered" evidence="2">
    <location>
        <begin position="1"/>
        <end position="21"/>
    </location>
</feature>
<name>RK16_TUPAK</name>